<name>UPPP_STRA3</name>
<keyword id="KW-0046">Antibiotic resistance</keyword>
<keyword id="KW-1003">Cell membrane</keyword>
<keyword id="KW-0133">Cell shape</keyword>
<keyword id="KW-0961">Cell wall biogenesis/degradation</keyword>
<keyword id="KW-0378">Hydrolase</keyword>
<keyword id="KW-0472">Membrane</keyword>
<keyword id="KW-0573">Peptidoglycan synthesis</keyword>
<keyword id="KW-0812">Transmembrane</keyword>
<keyword id="KW-1133">Transmembrane helix</keyword>
<protein>
    <recommendedName>
        <fullName evidence="1">Undecaprenyl-diphosphatase</fullName>
        <ecNumber evidence="1">3.6.1.27</ecNumber>
    </recommendedName>
    <alternativeName>
        <fullName evidence="1">Bacitracin resistance protein</fullName>
    </alternativeName>
    <alternativeName>
        <fullName evidence="1">Undecaprenyl pyrophosphate phosphatase</fullName>
    </alternativeName>
</protein>
<comment type="function">
    <text evidence="1">Catalyzes the dephosphorylation of undecaprenyl diphosphate (UPP). Confers resistance to bacitracin.</text>
</comment>
<comment type="catalytic activity">
    <reaction evidence="1">
        <text>di-trans,octa-cis-undecaprenyl diphosphate + H2O = di-trans,octa-cis-undecaprenyl phosphate + phosphate + H(+)</text>
        <dbReference type="Rhea" id="RHEA:28094"/>
        <dbReference type="ChEBI" id="CHEBI:15377"/>
        <dbReference type="ChEBI" id="CHEBI:15378"/>
        <dbReference type="ChEBI" id="CHEBI:43474"/>
        <dbReference type="ChEBI" id="CHEBI:58405"/>
        <dbReference type="ChEBI" id="CHEBI:60392"/>
        <dbReference type="EC" id="3.6.1.27"/>
    </reaction>
</comment>
<comment type="subcellular location">
    <subcellularLocation>
        <location evidence="1">Cell membrane</location>
        <topology evidence="1">Multi-pass membrane protein</topology>
    </subcellularLocation>
</comment>
<comment type="miscellaneous">
    <text>Bacitracin is thought to be involved in the inhibition of peptidoglycan synthesis by sequestering undecaprenyl diphosphate, thereby reducing the pool of lipid carrier available.</text>
</comment>
<comment type="similarity">
    <text evidence="1">Belongs to the UppP family.</text>
</comment>
<evidence type="ECO:0000255" key="1">
    <source>
        <dbReference type="HAMAP-Rule" id="MF_01006"/>
    </source>
</evidence>
<reference key="1">
    <citation type="journal article" date="2002" name="Mol. Microbiol.">
        <title>Genome sequence of Streptococcus agalactiae, a pathogen causing invasive neonatal disease.</title>
        <authorList>
            <person name="Glaser P."/>
            <person name="Rusniok C."/>
            <person name="Buchrieser C."/>
            <person name="Chevalier F."/>
            <person name="Frangeul L."/>
            <person name="Msadek T."/>
            <person name="Zouine M."/>
            <person name="Couve E."/>
            <person name="Lalioui L."/>
            <person name="Poyart C."/>
            <person name="Trieu-Cuot P."/>
            <person name="Kunst F."/>
        </authorList>
    </citation>
    <scope>NUCLEOTIDE SEQUENCE [LARGE SCALE GENOMIC DNA]</scope>
    <source>
        <strain>NEM316</strain>
    </source>
</reference>
<proteinExistence type="inferred from homology"/>
<dbReference type="EC" id="3.6.1.27" evidence="1"/>
<dbReference type="EMBL" id="AL766844">
    <property type="protein sequence ID" value="CAD45779.1"/>
    <property type="molecule type" value="Genomic_DNA"/>
</dbReference>
<dbReference type="RefSeq" id="WP_000905327.1">
    <property type="nucleotide sequence ID" value="NC_004368.1"/>
</dbReference>
<dbReference type="SMR" id="Q8E7M0"/>
<dbReference type="KEGG" id="san:gbs0134"/>
<dbReference type="eggNOG" id="COG1968">
    <property type="taxonomic scope" value="Bacteria"/>
</dbReference>
<dbReference type="HOGENOM" id="CLU_060296_2_0_9"/>
<dbReference type="Proteomes" id="UP000000823">
    <property type="component" value="Chromosome"/>
</dbReference>
<dbReference type="GO" id="GO:0005886">
    <property type="term" value="C:plasma membrane"/>
    <property type="evidence" value="ECO:0007669"/>
    <property type="project" value="UniProtKB-SubCell"/>
</dbReference>
<dbReference type="GO" id="GO:0050380">
    <property type="term" value="F:undecaprenyl-diphosphatase activity"/>
    <property type="evidence" value="ECO:0007669"/>
    <property type="project" value="UniProtKB-UniRule"/>
</dbReference>
<dbReference type="GO" id="GO:0071555">
    <property type="term" value="P:cell wall organization"/>
    <property type="evidence" value="ECO:0007669"/>
    <property type="project" value="UniProtKB-KW"/>
</dbReference>
<dbReference type="GO" id="GO:0009252">
    <property type="term" value="P:peptidoglycan biosynthetic process"/>
    <property type="evidence" value="ECO:0007669"/>
    <property type="project" value="UniProtKB-KW"/>
</dbReference>
<dbReference type="GO" id="GO:0008360">
    <property type="term" value="P:regulation of cell shape"/>
    <property type="evidence" value="ECO:0007669"/>
    <property type="project" value="UniProtKB-KW"/>
</dbReference>
<dbReference type="GO" id="GO:0046677">
    <property type="term" value="P:response to antibiotic"/>
    <property type="evidence" value="ECO:0007669"/>
    <property type="project" value="UniProtKB-UniRule"/>
</dbReference>
<dbReference type="HAMAP" id="MF_01006">
    <property type="entry name" value="Undec_diphosphatase"/>
    <property type="match status" value="1"/>
</dbReference>
<dbReference type="InterPro" id="IPR003824">
    <property type="entry name" value="UppP"/>
</dbReference>
<dbReference type="NCBIfam" id="NF001391">
    <property type="entry name" value="PRK00281.1-5"/>
    <property type="match status" value="1"/>
</dbReference>
<dbReference type="PANTHER" id="PTHR30622">
    <property type="entry name" value="UNDECAPRENYL-DIPHOSPHATASE"/>
    <property type="match status" value="1"/>
</dbReference>
<dbReference type="PANTHER" id="PTHR30622:SF3">
    <property type="entry name" value="UNDECAPRENYL-DIPHOSPHATASE"/>
    <property type="match status" value="1"/>
</dbReference>
<dbReference type="Pfam" id="PF02673">
    <property type="entry name" value="BacA"/>
    <property type="match status" value="1"/>
</dbReference>
<sequence>MLIIELLKALFLGVVEGVTEWLPVSSTGHLILVQEFMKLNQSKSFVEMFNIVIQLGAIMAVIVIYFKRLNPFQPGKSAREIRLTWQLWLKVVIACIPSILIALPFDNWFEAHFNFMIPIAIALIFYGFVFIWVEKRNAHLKPQVTELASMSYKTAFLIGCFQVLSIVPGTSRSGATILGAIIIGTSRSVAADFTFFLAIPTMFGYSGLKAVKYFLDGNVLSLDQSLILLVASLTAFVVSLYVIRFLTDYVKRHDFTIFGKYRIVLGSLLILYWLVVHLF</sequence>
<organism>
    <name type="scientific">Streptococcus agalactiae serotype III (strain NEM316)</name>
    <dbReference type="NCBI Taxonomy" id="211110"/>
    <lineage>
        <taxon>Bacteria</taxon>
        <taxon>Bacillati</taxon>
        <taxon>Bacillota</taxon>
        <taxon>Bacilli</taxon>
        <taxon>Lactobacillales</taxon>
        <taxon>Streptococcaceae</taxon>
        <taxon>Streptococcus</taxon>
    </lineage>
</organism>
<gene>
    <name evidence="1" type="primary">uppP</name>
    <name type="synonym">bacA</name>
    <name type="synonym">upk</name>
    <name type="ordered locus">gbs0134</name>
</gene>
<accession>Q8E7M0</accession>
<feature type="chain" id="PRO_0000151207" description="Undecaprenyl-diphosphatase">
    <location>
        <begin position="1"/>
        <end position="279"/>
    </location>
</feature>
<feature type="transmembrane region" description="Helical" evidence="1">
    <location>
        <begin position="45"/>
        <end position="65"/>
    </location>
</feature>
<feature type="transmembrane region" description="Helical" evidence="1">
    <location>
        <begin position="85"/>
        <end position="105"/>
    </location>
</feature>
<feature type="transmembrane region" description="Helical" evidence="1">
    <location>
        <begin position="113"/>
        <end position="133"/>
    </location>
</feature>
<feature type="transmembrane region" description="Helical" evidence="1">
    <location>
        <begin position="188"/>
        <end position="208"/>
    </location>
</feature>
<feature type="transmembrane region" description="Helical" evidence="1">
    <location>
        <begin position="226"/>
        <end position="246"/>
    </location>
</feature>
<feature type="transmembrane region" description="Helical" evidence="1">
    <location>
        <begin position="255"/>
        <end position="275"/>
    </location>
</feature>